<feature type="signal peptide" evidence="2">
    <location>
        <begin position="1"/>
        <end position="17"/>
    </location>
</feature>
<feature type="chain" id="PRO_0000021593" description="GH3 domain-containing protein">
    <location>
        <begin position="18"/>
        <end position="530"/>
    </location>
</feature>
<feature type="region of interest" description="Disordered" evidence="3">
    <location>
        <begin position="99"/>
        <end position="122"/>
    </location>
</feature>
<feature type="modified residue" description="N5-methylglutamine" evidence="4">
    <location>
        <position position="489"/>
    </location>
</feature>
<feature type="glycosylation site" description="N-linked (GlcNAc...) asparagine" evidence="2">
    <location>
        <position position="450"/>
    </location>
</feature>
<feature type="splice variant" id="VSP_044831" description="In isoform 3." evidence="5">
    <location>
        <begin position="101"/>
        <end position="139"/>
    </location>
</feature>
<feature type="splice variant" id="VSP_010835" description="In isoform 2." evidence="5">
    <original>DSSAGSAPHYEVFVALRGLRNLSEENRDKLDHCLQEASPRYKSLR</original>
    <variation>EWGRTDRAEDTRLGSCPFTGSMCAHGVYSQIPLRALLPTTRCLWR</variation>
    <location>
        <begin position="430"/>
        <end position="474"/>
    </location>
</feature>
<feature type="splice variant" id="VSP_010836" description="In isoform 2." evidence="5">
    <location>
        <begin position="475"/>
        <end position="530"/>
    </location>
</feature>
<feature type="mutagenesis site" description="Abolishes methylation by N6AMT1." evidence="4">
    <original>Q</original>
    <variation>R</variation>
    <location>
        <position position="489"/>
    </location>
</feature>
<feature type="sequence conflict" description="In Ref. 2; BAC11514." evidence="6" ref="2">
    <original>D</original>
    <variation>G</variation>
    <location>
        <position position="420"/>
    </location>
</feature>
<protein>
    <recommendedName>
        <fullName>GH3 domain-containing protein</fullName>
    </recommendedName>
</protein>
<accession>Q8N2G8</accession>
<accession>B4DQS4</accession>
<accession>E9PDB5</accession>
<accession>Q9BXM6</accession>
<gene>
    <name type="primary">GHDC</name>
    <name type="synonym">D11LGP1E</name>
    <name type="synonym">LGP1</name>
</gene>
<reference key="1">
    <citation type="journal article" date="2001" name="Genomics">
        <title>Structure of the mouse Stat 3/5 locus: evolution from Drosophila to zebrafish to mouse.</title>
        <authorList>
            <person name="Miyoshi K."/>
            <person name="Cui Y."/>
            <person name="Riedlinger G."/>
            <person name="Robinson P."/>
            <person name="Lehoczky J."/>
            <person name="Zon L."/>
            <person name="Oka T."/>
            <person name="Dewar K."/>
            <person name="Hennighausen L."/>
        </authorList>
    </citation>
    <scope>NUCLEOTIDE SEQUENCE [MRNA] (ISOFORM 1)</scope>
</reference>
<reference key="2">
    <citation type="journal article" date="2004" name="Nat. Genet.">
        <title>Complete sequencing and characterization of 21,243 full-length human cDNAs.</title>
        <authorList>
            <person name="Ota T."/>
            <person name="Suzuki Y."/>
            <person name="Nishikawa T."/>
            <person name="Otsuki T."/>
            <person name="Sugiyama T."/>
            <person name="Irie R."/>
            <person name="Wakamatsu A."/>
            <person name="Hayashi K."/>
            <person name="Sato H."/>
            <person name="Nagai K."/>
            <person name="Kimura K."/>
            <person name="Makita H."/>
            <person name="Sekine M."/>
            <person name="Obayashi M."/>
            <person name="Nishi T."/>
            <person name="Shibahara T."/>
            <person name="Tanaka T."/>
            <person name="Ishii S."/>
            <person name="Yamamoto J."/>
            <person name="Saito K."/>
            <person name="Kawai Y."/>
            <person name="Isono Y."/>
            <person name="Nakamura Y."/>
            <person name="Nagahari K."/>
            <person name="Murakami K."/>
            <person name="Yasuda T."/>
            <person name="Iwayanagi T."/>
            <person name="Wagatsuma M."/>
            <person name="Shiratori A."/>
            <person name="Sudo H."/>
            <person name="Hosoiri T."/>
            <person name="Kaku Y."/>
            <person name="Kodaira H."/>
            <person name="Kondo H."/>
            <person name="Sugawara M."/>
            <person name="Takahashi M."/>
            <person name="Kanda K."/>
            <person name="Yokoi T."/>
            <person name="Furuya T."/>
            <person name="Kikkawa E."/>
            <person name="Omura Y."/>
            <person name="Abe K."/>
            <person name="Kamihara K."/>
            <person name="Katsuta N."/>
            <person name="Sato K."/>
            <person name="Tanikawa M."/>
            <person name="Yamazaki M."/>
            <person name="Ninomiya K."/>
            <person name="Ishibashi T."/>
            <person name="Yamashita H."/>
            <person name="Murakawa K."/>
            <person name="Fujimori K."/>
            <person name="Tanai H."/>
            <person name="Kimata M."/>
            <person name="Watanabe M."/>
            <person name="Hiraoka S."/>
            <person name="Chiba Y."/>
            <person name="Ishida S."/>
            <person name="Ono Y."/>
            <person name="Takiguchi S."/>
            <person name="Watanabe S."/>
            <person name="Yosida M."/>
            <person name="Hotuta T."/>
            <person name="Kusano J."/>
            <person name="Kanehori K."/>
            <person name="Takahashi-Fujii A."/>
            <person name="Hara H."/>
            <person name="Tanase T.-O."/>
            <person name="Nomura Y."/>
            <person name="Togiya S."/>
            <person name="Komai F."/>
            <person name="Hara R."/>
            <person name="Takeuchi K."/>
            <person name="Arita M."/>
            <person name="Imose N."/>
            <person name="Musashino K."/>
            <person name="Yuuki H."/>
            <person name="Oshima A."/>
            <person name="Sasaki N."/>
            <person name="Aotsuka S."/>
            <person name="Yoshikawa Y."/>
            <person name="Matsunawa H."/>
            <person name="Ichihara T."/>
            <person name="Shiohata N."/>
            <person name="Sano S."/>
            <person name="Moriya S."/>
            <person name="Momiyama H."/>
            <person name="Satoh N."/>
            <person name="Takami S."/>
            <person name="Terashima Y."/>
            <person name="Suzuki O."/>
            <person name="Nakagawa S."/>
            <person name="Senoh A."/>
            <person name="Mizoguchi H."/>
            <person name="Goto Y."/>
            <person name="Shimizu F."/>
            <person name="Wakebe H."/>
            <person name="Hishigaki H."/>
            <person name="Watanabe T."/>
            <person name="Sugiyama A."/>
            <person name="Takemoto M."/>
            <person name="Kawakami B."/>
            <person name="Yamazaki M."/>
            <person name="Watanabe K."/>
            <person name="Kumagai A."/>
            <person name="Itakura S."/>
            <person name="Fukuzumi Y."/>
            <person name="Fujimori Y."/>
            <person name="Komiyama M."/>
            <person name="Tashiro H."/>
            <person name="Tanigami A."/>
            <person name="Fujiwara T."/>
            <person name="Ono T."/>
            <person name="Yamada K."/>
            <person name="Fujii Y."/>
            <person name="Ozaki K."/>
            <person name="Hirao M."/>
            <person name="Ohmori Y."/>
            <person name="Kawabata A."/>
            <person name="Hikiji T."/>
            <person name="Kobatake N."/>
            <person name="Inagaki H."/>
            <person name="Ikema Y."/>
            <person name="Okamoto S."/>
            <person name="Okitani R."/>
            <person name="Kawakami T."/>
            <person name="Noguchi S."/>
            <person name="Itoh T."/>
            <person name="Shigeta K."/>
            <person name="Senba T."/>
            <person name="Matsumura K."/>
            <person name="Nakajima Y."/>
            <person name="Mizuno T."/>
            <person name="Morinaga M."/>
            <person name="Sasaki M."/>
            <person name="Togashi T."/>
            <person name="Oyama M."/>
            <person name="Hata H."/>
            <person name="Watanabe M."/>
            <person name="Komatsu T."/>
            <person name="Mizushima-Sugano J."/>
            <person name="Satoh T."/>
            <person name="Shirai Y."/>
            <person name="Takahashi Y."/>
            <person name="Nakagawa K."/>
            <person name="Okumura K."/>
            <person name="Nagase T."/>
            <person name="Nomura N."/>
            <person name="Kikuchi H."/>
            <person name="Masuho Y."/>
            <person name="Yamashita R."/>
            <person name="Nakai K."/>
            <person name="Yada T."/>
            <person name="Nakamura Y."/>
            <person name="Ohara O."/>
            <person name="Isogai T."/>
            <person name="Sugano S."/>
        </authorList>
    </citation>
    <scope>NUCLEOTIDE SEQUENCE [LARGE SCALE MRNA] (ISOFORMS 1; 2 AND 3)</scope>
    <source>
        <tissue>Mammary gland</tissue>
        <tissue>Thyroid</tissue>
    </source>
</reference>
<reference key="3">
    <citation type="journal article" date="2006" name="Nature">
        <title>DNA sequence of human chromosome 17 and analysis of rearrangement in the human lineage.</title>
        <authorList>
            <person name="Zody M.C."/>
            <person name="Garber M."/>
            <person name="Adams D.J."/>
            <person name="Sharpe T."/>
            <person name="Harrow J."/>
            <person name="Lupski J.R."/>
            <person name="Nicholson C."/>
            <person name="Searle S.M."/>
            <person name="Wilming L."/>
            <person name="Young S.K."/>
            <person name="Abouelleil A."/>
            <person name="Allen N.R."/>
            <person name="Bi W."/>
            <person name="Bloom T."/>
            <person name="Borowsky M.L."/>
            <person name="Bugalter B.E."/>
            <person name="Butler J."/>
            <person name="Chang J.L."/>
            <person name="Chen C.-K."/>
            <person name="Cook A."/>
            <person name="Corum B."/>
            <person name="Cuomo C.A."/>
            <person name="de Jong P.J."/>
            <person name="DeCaprio D."/>
            <person name="Dewar K."/>
            <person name="FitzGerald M."/>
            <person name="Gilbert J."/>
            <person name="Gibson R."/>
            <person name="Gnerre S."/>
            <person name="Goldstein S."/>
            <person name="Grafham D.V."/>
            <person name="Grocock R."/>
            <person name="Hafez N."/>
            <person name="Hagopian D.S."/>
            <person name="Hart E."/>
            <person name="Norman C.H."/>
            <person name="Humphray S."/>
            <person name="Jaffe D.B."/>
            <person name="Jones M."/>
            <person name="Kamal M."/>
            <person name="Khodiyar V.K."/>
            <person name="LaButti K."/>
            <person name="Laird G."/>
            <person name="Lehoczky J."/>
            <person name="Liu X."/>
            <person name="Lokyitsang T."/>
            <person name="Loveland J."/>
            <person name="Lui A."/>
            <person name="Macdonald P."/>
            <person name="Major J.E."/>
            <person name="Matthews L."/>
            <person name="Mauceli E."/>
            <person name="McCarroll S.A."/>
            <person name="Mihalev A.H."/>
            <person name="Mudge J."/>
            <person name="Nguyen C."/>
            <person name="Nicol R."/>
            <person name="O'Leary S.B."/>
            <person name="Osoegawa K."/>
            <person name="Schwartz D.C."/>
            <person name="Shaw-Smith C."/>
            <person name="Stankiewicz P."/>
            <person name="Steward C."/>
            <person name="Swarbreck D."/>
            <person name="Venkataraman V."/>
            <person name="Whittaker C.A."/>
            <person name="Yang X."/>
            <person name="Zimmer A.R."/>
            <person name="Bradley A."/>
            <person name="Hubbard T."/>
            <person name="Birren B.W."/>
            <person name="Rogers J."/>
            <person name="Lander E.S."/>
            <person name="Nusbaum C."/>
        </authorList>
    </citation>
    <scope>NUCLEOTIDE SEQUENCE [LARGE SCALE GENOMIC DNA]</scope>
</reference>
<reference key="4">
    <citation type="journal article" date="2004" name="Genome Res.">
        <title>The status, quality, and expansion of the NIH full-length cDNA project: the Mammalian Gene Collection (MGC).</title>
        <authorList>
            <consortium name="The MGC Project Team"/>
        </authorList>
    </citation>
    <scope>NUCLEOTIDE SEQUENCE [LARGE SCALE MRNA] (ISOFORM 1)</scope>
    <source>
        <tissue>Colon</tissue>
    </source>
</reference>
<reference key="5">
    <citation type="journal article" date="2011" name="BMC Syst. Biol.">
        <title>Initial characterization of the human central proteome.</title>
        <authorList>
            <person name="Burkard T.R."/>
            <person name="Planyavsky M."/>
            <person name="Kaupe I."/>
            <person name="Breitwieser F.P."/>
            <person name="Buerckstuemmer T."/>
            <person name="Bennett K.L."/>
            <person name="Superti-Furga G."/>
            <person name="Colinge J."/>
        </authorList>
    </citation>
    <scope>IDENTIFICATION BY MASS SPECTROMETRY [LARGE SCALE ANALYSIS]</scope>
</reference>
<reference key="6">
    <citation type="journal article" date="2014" name="J. Proteomics">
        <title>An enzyme assisted RP-RPLC approach for in-depth analysis of human liver phosphoproteome.</title>
        <authorList>
            <person name="Bian Y."/>
            <person name="Song C."/>
            <person name="Cheng K."/>
            <person name="Dong M."/>
            <person name="Wang F."/>
            <person name="Huang J."/>
            <person name="Sun D."/>
            <person name="Wang L."/>
            <person name="Ye M."/>
            <person name="Zou H."/>
        </authorList>
    </citation>
    <scope>IDENTIFICATION BY MASS SPECTROMETRY [LARGE SCALE ANALYSIS]</scope>
    <source>
        <tissue>Liver</tissue>
    </source>
</reference>
<reference key="7">
    <citation type="journal article" date="2016" name="J. Biol. Chem.">
        <title>Substrate specificity of the HEMK2 protein glutamine methyltransferase and identification of novel substrates.</title>
        <authorList>
            <person name="Kusevic D."/>
            <person name="Kudithipudi S."/>
            <person name="Jeltsch A."/>
        </authorList>
    </citation>
    <scope>METHYLATION AT GLN-489</scope>
    <scope>MUTAGENESIS OF GLN-489</scope>
</reference>
<comment type="subcellular location">
    <subcellularLocation>
        <location evidence="1">Endoplasmic reticulum</location>
    </subcellularLocation>
    <subcellularLocation>
        <location evidence="1">Nucleus envelope</location>
    </subcellularLocation>
</comment>
<comment type="alternative products">
    <event type="alternative splicing"/>
    <isoform>
        <id>Q8N2G8-1</id>
        <name>1</name>
        <sequence type="displayed"/>
    </isoform>
    <isoform>
        <id>Q8N2G8-2</id>
        <name>2</name>
        <sequence type="described" ref="VSP_010835 VSP_010836"/>
    </isoform>
    <isoform>
        <id>Q8N2G8-3</id>
        <name>3</name>
        <sequence type="described" ref="VSP_044831"/>
    </isoform>
</comment>
<comment type="PTM">
    <text evidence="4">Methylated at Gln-489 by N6AMT1.</text>
</comment>
<comment type="similarity">
    <text evidence="6">Belongs to the GH3 family.</text>
</comment>
<keyword id="KW-0025">Alternative splicing</keyword>
<keyword id="KW-0256">Endoplasmic reticulum</keyword>
<keyword id="KW-0325">Glycoprotein</keyword>
<keyword id="KW-0488">Methylation</keyword>
<keyword id="KW-0539">Nucleus</keyword>
<keyword id="KW-1267">Proteomics identification</keyword>
<keyword id="KW-1185">Reference proteome</keyword>
<keyword id="KW-0732">Signal</keyword>
<sequence length="530" mass="57523">MLLWPLLLLLLLLPTLALLRQQRSQDARLSWLAGLQHRVAWGALVWAATWQRRRLEQSTLHVHQSQQQALRWCLQGAQRPHCSLRRSTDISTFRNHLPLTKASQTQQEDSGEQPLPPTSNQDLGEASLQATLLGLAALNKAYPEVLAQGRTARVTLTSPWPRPLPWPGNTLGQVGTPGTKDPRALLLDALRSPGLRALEAGTAVELLDVFLGLETDGEELAGAIAAGNPGAPLRERAAELREALEQGPRGLALRLWPKLQVVVTLDAGGQAEAVAALGALWCQGLAFFSPAYAASGGVLGLNLQPEQPHGLYLLPPGAPFIELLPVKEGTQEEAASTLLLAEAQQGKEYELVLTDRASLTRCRLGDVVRVVGAYNQCPVVRFICRLDQTLSVRGEDIGEDLFSEALGRAVGQWAGAKLLDHGCVESSILDSSAGSAPHYEVFVALRGLRNLSEENRDKLDHCLQEASPRYKSLRFWGSVGPARVHLVGQGAFRALRAALAACPSSPFPPAMPRVLRHRHLAQCLQERVVS</sequence>
<name>GHDC_HUMAN</name>
<proteinExistence type="evidence at protein level"/>
<organism>
    <name type="scientific">Homo sapiens</name>
    <name type="common">Human</name>
    <dbReference type="NCBI Taxonomy" id="9606"/>
    <lineage>
        <taxon>Eukaryota</taxon>
        <taxon>Metazoa</taxon>
        <taxon>Chordata</taxon>
        <taxon>Craniata</taxon>
        <taxon>Vertebrata</taxon>
        <taxon>Euteleostomi</taxon>
        <taxon>Mammalia</taxon>
        <taxon>Eutheria</taxon>
        <taxon>Euarchontoglires</taxon>
        <taxon>Primates</taxon>
        <taxon>Haplorrhini</taxon>
        <taxon>Catarrhini</taxon>
        <taxon>Hominidae</taxon>
        <taxon>Homo</taxon>
    </lineage>
</organism>
<dbReference type="EMBL" id="AF316997">
    <property type="protein sequence ID" value="AAK15472.1"/>
    <property type="molecule type" value="mRNA"/>
</dbReference>
<dbReference type="EMBL" id="AK074700">
    <property type="protein sequence ID" value="BAC11146.1"/>
    <property type="molecule type" value="mRNA"/>
</dbReference>
<dbReference type="EMBL" id="AK075277">
    <property type="protein sequence ID" value="BAC11514.1"/>
    <property type="molecule type" value="mRNA"/>
</dbReference>
<dbReference type="EMBL" id="AK298933">
    <property type="protein sequence ID" value="BAG61036.1"/>
    <property type="molecule type" value="mRNA"/>
</dbReference>
<dbReference type="EMBL" id="AC099811">
    <property type="status" value="NOT_ANNOTATED_CDS"/>
    <property type="molecule type" value="Genomic_DNA"/>
</dbReference>
<dbReference type="EMBL" id="BC022784">
    <property type="protein sequence ID" value="AAH22784.1"/>
    <property type="molecule type" value="mRNA"/>
</dbReference>
<dbReference type="CCDS" id="CCDS11422.1">
    <molecule id="Q8N2G8-1"/>
</dbReference>
<dbReference type="CCDS" id="CCDS45682.1">
    <molecule id="Q8N2G8-2"/>
</dbReference>
<dbReference type="RefSeq" id="NP_001136095.1">
    <molecule id="Q8N2G8-2"/>
    <property type="nucleotide sequence ID" value="NM_001142623.2"/>
</dbReference>
<dbReference type="RefSeq" id="NP_115873.1">
    <molecule id="Q8N2G8-1"/>
    <property type="nucleotide sequence ID" value="NM_032484.5"/>
</dbReference>
<dbReference type="SMR" id="Q8N2G8"/>
<dbReference type="BioGRID" id="124108">
    <property type="interactions" value="74"/>
</dbReference>
<dbReference type="FunCoup" id="Q8N2G8">
    <property type="interactions" value="606"/>
</dbReference>
<dbReference type="IntAct" id="Q8N2G8">
    <property type="interactions" value="57"/>
</dbReference>
<dbReference type="STRING" id="9606.ENSP00000301671"/>
<dbReference type="GlyCosmos" id="Q8N2G8">
    <property type="glycosylation" value="1 site, No reported glycans"/>
</dbReference>
<dbReference type="GlyGen" id="Q8N2G8">
    <property type="glycosylation" value="2 sites, 1 O-linked glycan (1 site)"/>
</dbReference>
<dbReference type="iPTMnet" id="Q8N2G8"/>
<dbReference type="PhosphoSitePlus" id="Q8N2G8"/>
<dbReference type="SwissPalm" id="Q8N2G8"/>
<dbReference type="BioMuta" id="GHDC"/>
<dbReference type="DMDM" id="50401069"/>
<dbReference type="jPOST" id="Q8N2G8"/>
<dbReference type="MassIVE" id="Q8N2G8"/>
<dbReference type="PaxDb" id="9606-ENSP00000301671"/>
<dbReference type="PeptideAtlas" id="Q8N2G8"/>
<dbReference type="ProteomicsDB" id="19626"/>
<dbReference type="ProteomicsDB" id="71697">
    <molecule id="Q8N2G8-1"/>
</dbReference>
<dbReference type="ProteomicsDB" id="71698">
    <molecule id="Q8N2G8-2"/>
</dbReference>
<dbReference type="Pumba" id="Q8N2G8"/>
<dbReference type="Antibodypedia" id="29163">
    <property type="antibodies" value="91 antibodies from 23 providers"/>
</dbReference>
<dbReference type="DNASU" id="84514"/>
<dbReference type="Ensembl" id="ENST00000301671.12">
    <molecule id="Q8N2G8-1"/>
    <property type="protein sequence ID" value="ENSP00000301671.7"/>
    <property type="gene ID" value="ENSG00000167925.17"/>
</dbReference>
<dbReference type="Ensembl" id="ENST00000414034.7">
    <molecule id="Q8N2G8-2"/>
    <property type="protein sequence ID" value="ENSP00000399952.2"/>
    <property type="gene ID" value="ENSG00000167925.17"/>
</dbReference>
<dbReference type="Ensembl" id="ENST00000587427.6">
    <molecule id="Q8N2G8-1"/>
    <property type="protein sequence ID" value="ENSP00000467585.1"/>
    <property type="gene ID" value="ENSG00000167925.17"/>
</dbReference>
<dbReference type="GeneID" id="84514"/>
<dbReference type="KEGG" id="hsa:84514"/>
<dbReference type="MANE-Select" id="ENST00000587427.6">
    <property type="protein sequence ID" value="ENSP00000467585.1"/>
    <property type="RefSeq nucleotide sequence ID" value="NM_032484.5"/>
    <property type="RefSeq protein sequence ID" value="NP_115873.1"/>
</dbReference>
<dbReference type="UCSC" id="uc002hzd.4">
    <molecule id="Q8N2G8-1"/>
    <property type="organism name" value="human"/>
</dbReference>
<dbReference type="AGR" id="HGNC:24438"/>
<dbReference type="CTD" id="84514"/>
<dbReference type="GeneCards" id="GHDC"/>
<dbReference type="HGNC" id="HGNC:24438">
    <property type="gene designation" value="GHDC"/>
</dbReference>
<dbReference type="HPA" id="ENSG00000167925">
    <property type="expression patterns" value="Low tissue specificity"/>
</dbReference>
<dbReference type="MIM" id="608587">
    <property type="type" value="gene"/>
</dbReference>
<dbReference type="neXtProt" id="NX_Q8N2G8"/>
<dbReference type="OpenTargets" id="ENSG00000167925"/>
<dbReference type="PharmGKB" id="PA147358034"/>
<dbReference type="VEuPathDB" id="HostDB:ENSG00000167925"/>
<dbReference type="eggNOG" id="ENOG502QPMW">
    <property type="taxonomic scope" value="Eukaryota"/>
</dbReference>
<dbReference type="GeneTree" id="ENSGT00390000016401"/>
<dbReference type="HOGENOM" id="CLU_038581_1_0_1"/>
<dbReference type="InParanoid" id="Q8N2G8"/>
<dbReference type="OMA" id="HKLDHCL"/>
<dbReference type="OrthoDB" id="10004661at2759"/>
<dbReference type="PAN-GO" id="Q8N2G8">
    <property type="GO annotations" value="2 GO annotations based on evolutionary models"/>
</dbReference>
<dbReference type="PhylomeDB" id="Q8N2G8"/>
<dbReference type="TreeFam" id="TF333007"/>
<dbReference type="PathwayCommons" id="Q8N2G8"/>
<dbReference type="Reactome" id="R-HSA-6798695">
    <property type="pathway name" value="Neutrophil degranulation"/>
</dbReference>
<dbReference type="SignaLink" id="Q8N2G8"/>
<dbReference type="BioGRID-ORCS" id="84514">
    <property type="hits" value="20 hits in 1158 CRISPR screens"/>
</dbReference>
<dbReference type="GenomeRNAi" id="84514"/>
<dbReference type="Pharos" id="Q8N2G8">
    <property type="development level" value="Tbio"/>
</dbReference>
<dbReference type="PRO" id="PR:Q8N2G8"/>
<dbReference type="Proteomes" id="UP000005640">
    <property type="component" value="Chromosome 17"/>
</dbReference>
<dbReference type="RNAct" id="Q8N2G8">
    <property type="molecule type" value="protein"/>
</dbReference>
<dbReference type="Bgee" id="ENSG00000167925">
    <property type="expression patterns" value="Expressed in right adrenal gland cortex and 140 other cell types or tissues"/>
</dbReference>
<dbReference type="ExpressionAtlas" id="Q8N2G8">
    <property type="expression patterns" value="baseline and differential"/>
</dbReference>
<dbReference type="GO" id="GO:0005737">
    <property type="term" value="C:cytoplasm"/>
    <property type="evidence" value="ECO:0000318"/>
    <property type="project" value="GO_Central"/>
</dbReference>
<dbReference type="GO" id="GO:0005783">
    <property type="term" value="C:endoplasmic reticulum"/>
    <property type="evidence" value="ECO:0007669"/>
    <property type="project" value="UniProtKB-SubCell"/>
</dbReference>
<dbReference type="GO" id="GO:0005576">
    <property type="term" value="C:extracellular region"/>
    <property type="evidence" value="ECO:0000304"/>
    <property type="project" value="Reactome"/>
</dbReference>
<dbReference type="GO" id="GO:0016020">
    <property type="term" value="C:membrane"/>
    <property type="evidence" value="ECO:0007005"/>
    <property type="project" value="UniProtKB"/>
</dbReference>
<dbReference type="GO" id="GO:0005635">
    <property type="term" value="C:nuclear envelope"/>
    <property type="evidence" value="ECO:0007669"/>
    <property type="project" value="UniProtKB-SubCell"/>
</dbReference>
<dbReference type="GO" id="GO:0034774">
    <property type="term" value="C:secretory granule lumen"/>
    <property type="evidence" value="ECO:0000304"/>
    <property type="project" value="Reactome"/>
</dbReference>
<dbReference type="GO" id="GO:0035580">
    <property type="term" value="C:specific granule lumen"/>
    <property type="evidence" value="ECO:0000304"/>
    <property type="project" value="Reactome"/>
</dbReference>
<dbReference type="GO" id="GO:0016881">
    <property type="term" value="F:acid-amino acid ligase activity"/>
    <property type="evidence" value="ECO:0000318"/>
    <property type="project" value="GO_Central"/>
</dbReference>
<dbReference type="InterPro" id="IPR004993">
    <property type="entry name" value="GH3"/>
</dbReference>
<dbReference type="InterPro" id="IPR055378">
    <property type="entry name" value="GH3_C"/>
</dbReference>
<dbReference type="InterPro" id="IPR055377">
    <property type="entry name" value="GH3_M"/>
</dbReference>
<dbReference type="InterPro" id="IPR056985">
    <property type="entry name" value="GH3_N"/>
</dbReference>
<dbReference type="PANTHER" id="PTHR31901">
    <property type="entry name" value="GH3 DOMAIN-CONTAINING PROTEIN"/>
    <property type="match status" value="1"/>
</dbReference>
<dbReference type="PANTHER" id="PTHR31901:SF9">
    <property type="entry name" value="GH3 DOMAIN-CONTAINING PROTEIN"/>
    <property type="match status" value="1"/>
</dbReference>
<dbReference type="Pfam" id="PF23572">
    <property type="entry name" value="GH3_C"/>
    <property type="match status" value="1"/>
</dbReference>
<dbReference type="Pfam" id="PF23571">
    <property type="entry name" value="GH3_M"/>
    <property type="match status" value="1"/>
</dbReference>
<dbReference type="Pfam" id="PF25146">
    <property type="entry name" value="GH3_N_vert"/>
    <property type="match status" value="1"/>
</dbReference>
<evidence type="ECO:0000250" key="1">
    <source>
        <dbReference type="UniProtKB" id="Q99J23"/>
    </source>
</evidence>
<evidence type="ECO:0000255" key="2"/>
<evidence type="ECO:0000256" key="3">
    <source>
        <dbReference type="SAM" id="MobiDB-lite"/>
    </source>
</evidence>
<evidence type="ECO:0000269" key="4">
    <source>
    </source>
</evidence>
<evidence type="ECO:0000303" key="5">
    <source>
    </source>
</evidence>
<evidence type="ECO:0000305" key="6"/>